<accession>Q02XM8</accession>
<sequence length="132" mass="14592">MKKEVILNSELAKIADDLGHTDQVCIGDLGLPVPSGVKKIDLALTRGKPTFQEVLDIYLENILVEKIYLADEIKENNPEQLKILLTKLSADVEVVFVSHETLKLMNHDVKAVVRTGENTPYSNIILQSGVAL</sequence>
<feature type="chain" id="PRO_0000346223" description="D-ribose pyranase">
    <location>
        <begin position="1"/>
        <end position="132"/>
    </location>
</feature>
<feature type="active site" description="Proton donor" evidence="1">
    <location>
        <position position="20"/>
    </location>
</feature>
<feature type="binding site" evidence="1">
    <location>
        <position position="28"/>
    </location>
    <ligand>
        <name>substrate</name>
    </ligand>
</feature>
<feature type="binding site" evidence="1">
    <location>
        <position position="99"/>
    </location>
    <ligand>
        <name>substrate</name>
    </ligand>
</feature>
<feature type="binding site" evidence="1">
    <location>
        <begin position="121"/>
        <end position="123"/>
    </location>
    <ligand>
        <name>substrate</name>
    </ligand>
</feature>
<name>RBSD_LACLS</name>
<keyword id="KW-0119">Carbohydrate metabolism</keyword>
<keyword id="KW-0963">Cytoplasm</keyword>
<keyword id="KW-0413">Isomerase</keyword>
<gene>
    <name evidence="1" type="primary">rbsD</name>
    <name type="ordered locus">LACR_1801</name>
</gene>
<proteinExistence type="inferred from homology"/>
<protein>
    <recommendedName>
        <fullName evidence="1">D-ribose pyranase</fullName>
        <ecNumber evidence="1">5.4.99.62</ecNumber>
    </recommendedName>
</protein>
<comment type="function">
    <text evidence="1">Catalyzes the interconversion of beta-pyran and beta-furan forms of D-ribose.</text>
</comment>
<comment type="catalytic activity">
    <reaction evidence="1">
        <text>beta-D-ribopyranose = beta-D-ribofuranose</text>
        <dbReference type="Rhea" id="RHEA:25432"/>
        <dbReference type="ChEBI" id="CHEBI:27476"/>
        <dbReference type="ChEBI" id="CHEBI:47002"/>
        <dbReference type="EC" id="5.4.99.62"/>
    </reaction>
</comment>
<comment type="pathway">
    <text evidence="1">Carbohydrate metabolism; D-ribose degradation; D-ribose 5-phosphate from beta-D-ribopyranose: step 1/2.</text>
</comment>
<comment type="subunit">
    <text evidence="1">Homodecamer.</text>
</comment>
<comment type="subcellular location">
    <subcellularLocation>
        <location evidence="1">Cytoplasm</location>
    </subcellularLocation>
</comment>
<comment type="similarity">
    <text evidence="1">Belongs to the RbsD / FucU family. RbsD subfamily.</text>
</comment>
<organism>
    <name type="scientific">Lactococcus lactis subsp. cremoris (strain SK11)</name>
    <dbReference type="NCBI Taxonomy" id="272622"/>
    <lineage>
        <taxon>Bacteria</taxon>
        <taxon>Bacillati</taxon>
        <taxon>Bacillota</taxon>
        <taxon>Bacilli</taxon>
        <taxon>Lactobacillales</taxon>
        <taxon>Streptococcaceae</taxon>
        <taxon>Lactococcus</taxon>
        <taxon>Lactococcus cremoris subsp. cremoris</taxon>
    </lineage>
</organism>
<evidence type="ECO:0000255" key="1">
    <source>
        <dbReference type="HAMAP-Rule" id="MF_01661"/>
    </source>
</evidence>
<reference key="1">
    <citation type="journal article" date="2006" name="Proc. Natl. Acad. Sci. U.S.A.">
        <title>Comparative genomics of the lactic acid bacteria.</title>
        <authorList>
            <person name="Makarova K.S."/>
            <person name="Slesarev A."/>
            <person name="Wolf Y.I."/>
            <person name="Sorokin A."/>
            <person name="Mirkin B."/>
            <person name="Koonin E.V."/>
            <person name="Pavlov A."/>
            <person name="Pavlova N."/>
            <person name="Karamychev V."/>
            <person name="Polouchine N."/>
            <person name="Shakhova V."/>
            <person name="Grigoriev I."/>
            <person name="Lou Y."/>
            <person name="Rohksar D."/>
            <person name="Lucas S."/>
            <person name="Huang K."/>
            <person name="Goodstein D.M."/>
            <person name="Hawkins T."/>
            <person name="Plengvidhya V."/>
            <person name="Welker D."/>
            <person name="Hughes J."/>
            <person name="Goh Y."/>
            <person name="Benson A."/>
            <person name="Baldwin K."/>
            <person name="Lee J.-H."/>
            <person name="Diaz-Muniz I."/>
            <person name="Dosti B."/>
            <person name="Smeianov V."/>
            <person name="Wechter W."/>
            <person name="Barabote R."/>
            <person name="Lorca G."/>
            <person name="Altermann E."/>
            <person name="Barrangou R."/>
            <person name="Ganesan B."/>
            <person name="Xie Y."/>
            <person name="Rawsthorne H."/>
            <person name="Tamir D."/>
            <person name="Parker C."/>
            <person name="Breidt F."/>
            <person name="Broadbent J.R."/>
            <person name="Hutkins R."/>
            <person name="O'Sullivan D."/>
            <person name="Steele J."/>
            <person name="Unlu G."/>
            <person name="Saier M.H. Jr."/>
            <person name="Klaenhammer T."/>
            <person name="Richardson P."/>
            <person name="Kozyavkin S."/>
            <person name="Weimer B.C."/>
            <person name="Mills D.A."/>
        </authorList>
    </citation>
    <scope>NUCLEOTIDE SEQUENCE [LARGE SCALE GENOMIC DNA]</scope>
    <source>
        <strain>SK11</strain>
    </source>
</reference>
<dbReference type="EC" id="5.4.99.62" evidence="1"/>
<dbReference type="EMBL" id="CP000425">
    <property type="protein sequence ID" value="ABJ73294.1"/>
    <property type="molecule type" value="Genomic_DNA"/>
</dbReference>
<dbReference type="RefSeq" id="WP_011676542.1">
    <property type="nucleotide sequence ID" value="NC_008527.1"/>
</dbReference>
<dbReference type="SMR" id="Q02XM8"/>
<dbReference type="KEGG" id="llc:LACR_1801"/>
<dbReference type="HOGENOM" id="CLU_135498_0_0_9"/>
<dbReference type="UniPathway" id="UPA00916">
    <property type="reaction ID" value="UER00888"/>
</dbReference>
<dbReference type="Proteomes" id="UP000000240">
    <property type="component" value="Chromosome"/>
</dbReference>
<dbReference type="GO" id="GO:0005829">
    <property type="term" value="C:cytosol"/>
    <property type="evidence" value="ECO:0007669"/>
    <property type="project" value="TreeGrafter"/>
</dbReference>
<dbReference type="GO" id="GO:0062193">
    <property type="term" value="F:D-ribose pyranase activity"/>
    <property type="evidence" value="ECO:0007669"/>
    <property type="project" value="UniProtKB-EC"/>
</dbReference>
<dbReference type="GO" id="GO:0016872">
    <property type="term" value="F:intramolecular lyase activity"/>
    <property type="evidence" value="ECO:0007669"/>
    <property type="project" value="UniProtKB-UniRule"/>
</dbReference>
<dbReference type="GO" id="GO:0048029">
    <property type="term" value="F:monosaccharide binding"/>
    <property type="evidence" value="ECO:0007669"/>
    <property type="project" value="InterPro"/>
</dbReference>
<dbReference type="GO" id="GO:0019303">
    <property type="term" value="P:D-ribose catabolic process"/>
    <property type="evidence" value="ECO:0007669"/>
    <property type="project" value="UniProtKB-UniRule"/>
</dbReference>
<dbReference type="Gene3D" id="3.40.1650.10">
    <property type="entry name" value="RbsD-like domain"/>
    <property type="match status" value="1"/>
</dbReference>
<dbReference type="HAMAP" id="MF_01661">
    <property type="entry name" value="D_rib_pyranase"/>
    <property type="match status" value="1"/>
</dbReference>
<dbReference type="InterPro" id="IPR023064">
    <property type="entry name" value="D-ribose_pyranase"/>
</dbReference>
<dbReference type="InterPro" id="IPR023750">
    <property type="entry name" value="RbsD-like_sf"/>
</dbReference>
<dbReference type="InterPro" id="IPR007721">
    <property type="entry name" value="RbsD_FucU"/>
</dbReference>
<dbReference type="NCBIfam" id="NF008761">
    <property type="entry name" value="PRK11797.1"/>
    <property type="match status" value="1"/>
</dbReference>
<dbReference type="PANTHER" id="PTHR37831">
    <property type="entry name" value="D-RIBOSE PYRANASE"/>
    <property type="match status" value="1"/>
</dbReference>
<dbReference type="PANTHER" id="PTHR37831:SF1">
    <property type="entry name" value="D-RIBOSE PYRANASE"/>
    <property type="match status" value="1"/>
</dbReference>
<dbReference type="Pfam" id="PF05025">
    <property type="entry name" value="RbsD_FucU"/>
    <property type="match status" value="1"/>
</dbReference>
<dbReference type="SUPFAM" id="SSF102546">
    <property type="entry name" value="RbsD-like"/>
    <property type="match status" value="1"/>
</dbReference>